<name>KHSE_PROM3</name>
<evidence type="ECO:0000255" key="1">
    <source>
        <dbReference type="HAMAP-Rule" id="MF_00384"/>
    </source>
</evidence>
<reference key="1">
    <citation type="journal article" date="2007" name="PLoS Genet.">
        <title>Patterns and implications of gene gain and loss in the evolution of Prochlorococcus.</title>
        <authorList>
            <person name="Kettler G.C."/>
            <person name="Martiny A.C."/>
            <person name="Huang K."/>
            <person name="Zucker J."/>
            <person name="Coleman M.L."/>
            <person name="Rodrigue S."/>
            <person name="Chen F."/>
            <person name="Lapidus A."/>
            <person name="Ferriera S."/>
            <person name="Johnson J."/>
            <person name="Steglich C."/>
            <person name="Church G.M."/>
            <person name="Richardson P."/>
            <person name="Chisholm S.W."/>
        </authorList>
    </citation>
    <scope>NUCLEOTIDE SEQUENCE [LARGE SCALE GENOMIC DNA]</scope>
    <source>
        <strain>MIT 9303</strain>
    </source>
</reference>
<sequence>MAQPSIGQKIVVDVPSTTANLGPGFDCLGAALDLNNRFAMRRIEGDSGRFELIIEGNEGSHLRGGPNNLIYRAAQRVWKAAGLEPVGLEAKVRLAVPPARGLGSSASAIVAGLVGANALVGEPLSKEKLLELAIDIEGHPDNVVPSLLGGLCLTAKAASQRWRVVRCVWINSVKVVVAIPSIRLSTSEARRAMPKDIPISDAVENLGALTLLLQGLRTGNGDLITDGMHDRLHEPYRWPLIKGGLDVRDAALNAGAWGCAISGAGPSVLALCPEDKGQAVSQAMVKAWEAEGVASRAPLLSIQTGGSHWQPQIEDE</sequence>
<proteinExistence type="inferred from homology"/>
<comment type="function">
    <text evidence="1">Catalyzes the ATP-dependent phosphorylation of L-homoserine to L-homoserine phosphate.</text>
</comment>
<comment type="catalytic activity">
    <reaction evidence="1">
        <text>L-homoserine + ATP = O-phospho-L-homoserine + ADP + H(+)</text>
        <dbReference type="Rhea" id="RHEA:13985"/>
        <dbReference type="ChEBI" id="CHEBI:15378"/>
        <dbReference type="ChEBI" id="CHEBI:30616"/>
        <dbReference type="ChEBI" id="CHEBI:57476"/>
        <dbReference type="ChEBI" id="CHEBI:57590"/>
        <dbReference type="ChEBI" id="CHEBI:456216"/>
        <dbReference type="EC" id="2.7.1.39"/>
    </reaction>
</comment>
<comment type="pathway">
    <text evidence="1">Amino-acid biosynthesis; L-threonine biosynthesis; L-threonine from L-aspartate: step 4/5.</text>
</comment>
<comment type="subcellular location">
    <subcellularLocation>
        <location evidence="1">Cytoplasm</location>
    </subcellularLocation>
</comment>
<comment type="similarity">
    <text evidence="1">Belongs to the GHMP kinase family. Homoserine kinase subfamily.</text>
</comment>
<keyword id="KW-0028">Amino-acid biosynthesis</keyword>
<keyword id="KW-0067">ATP-binding</keyword>
<keyword id="KW-0963">Cytoplasm</keyword>
<keyword id="KW-0418">Kinase</keyword>
<keyword id="KW-0547">Nucleotide-binding</keyword>
<keyword id="KW-0791">Threonine biosynthesis</keyword>
<keyword id="KW-0808">Transferase</keyword>
<organism>
    <name type="scientific">Prochlorococcus marinus (strain MIT 9303)</name>
    <dbReference type="NCBI Taxonomy" id="59922"/>
    <lineage>
        <taxon>Bacteria</taxon>
        <taxon>Bacillati</taxon>
        <taxon>Cyanobacteriota</taxon>
        <taxon>Cyanophyceae</taxon>
        <taxon>Synechococcales</taxon>
        <taxon>Prochlorococcaceae</taxon>
        <taxon>Prochlorococcus</taxon>
    </lineage>
</organism>
<feature type="chain" id="PRO_1000049157" description="Homoserine kinase">
    <location>
        <begin position="1"/>
        <end position="316"/>
    </location>
</feature>
<feature type="binding site" evidence="1">
    <location>
        <begin position="97"/>
        <end position="107"/>
    </location>
    <ligand>
        <name>ATP</name>
        <dbReference type="ChEBI" id="CHEBI:30616"/>
    </ligand>
</feature>
<accession>A2CAU0</accession>
<gene>
    <name evidence="1" type="primary">thrB</name>
    <name type="ordered locus">P9303_18581</name>
</gene>
<protein>
    <recommendedName>
        <fullName evidence="1">Homoserine kinase</fullName>
        <shortName evidence="1">HK</shortName>
        <shortName evidence="1">HSK</shortName>
        <ecNumber evidence="1">2.7.1.39</ecNumber>
    </recommendedName>
</protein>
<dbReference type="EC" id="2.7.1.39" evidence="1"/>
<dbReference type="EMBL" id="CP000554">
    <property type="protein sequence ID" value="ABM78600.1"/>
    <property type="molecule type" value="Genomic_DNA"/>
</dbReference>
<dbReference type="RefSeq" id="WP_011826485.1">
    <property type="nucleotide sequence ID" value="NC_008820.1"/>
</dbReference>
<dbReference type="SMR" id="A2CAU0"/>
<dbReference type="STRING" id="59922.P9303_18581"/>
<dbReference type="KEGG" id="pmf:P9303_18581"/>
<dbReference type="HOGENOM" id="CLU_041243_0_2_3"/>
<dbReference type="BioCyc" id="PMAR59922:G1G80-1611-MONOMER"/>
<dbReference type="UniPathway" id="UPA00050">
    <property type="reaction ID" value="UER00064"/>
</dbReference>
<dbReference type="Proteomes" id="UP000002274">
    <property type="component" value="Chromosome"/>
</dbReference>
<dbReference type="GO" id="GO:0005737">
    <property type="term" value="C:cytoplasm"/>
    <property type="evidence" value="ECO:0007669"/>
    <property type="project" value="UniProtKB-SubCell"/>
</dbReference>
<dbReference type="GO" id="GO:0005524">
    <property type="term" value="F:ATP binding"/>
    <property type="evidence" value="ECO:0007669"/>
    <property type="project" value="UniProtKB-UniRule"/>
</dbReference>
<dbReference type="GO" id="GO:0004413">
    <property type="term" value="F:homoserine kinase activity"/>
    <property type="evidence" value="ECO:0007669"/>
    <property type="project" value="UniProtKB-UniRule"/>
</dbReference>
<dbReference type="GO" id="GO:0009088">
    <property type="term" value="P:threonine biosynthetic process"/>
    <property type="evidence" value="ECO:0007669"/>
    <property type="project" value="UniProtKB-UniRule"/>
</dbReference>
<dbReference type="Gene3D" id="3.30.230.10">
    <property type="match status" value="1"/>
</dbReference>
<dbReference type="Gene3D" id="3.30.70.890">
    <property type="entry name" value="GHMP kinase, C-terminal domain"/>
    <property type="match status" value="1"/>
</dbReference>
<dbReference type="HAMAP" id="MF_00384">
    <property type="entry name" value="Homoser_kinase"/>
    <property type="match status" value="1"/>
</dbReference>
<dbReference type="InterPro" id="IPR013750">
    <property type="entry name" value="GHMP_kinase_C_dom"/>
</dbReference>
<dbReference type="InterPro" id="IPR036554">
    <property type="entry name" value="GHMP_kinase_C_sf"/>
</dbReference>
<dbReference type="InterPro" id="IPR006204">
    <property type="entry name" value="GHMP_kinase_N_dom"/>
</dbReference>
<dbReference type="InterPro" id="IPR006203">
    <property type="entry name" value="GHMP_knse_ATP-bd_CS"/>
</dbReference>
<dbReference type="InterPro" id="IPR000870">
    <property type="entry name" value="Homoserine_kinase"/>
</dbReference>
<dbReference type="InterPro" id="IPR020568">
    <property type="entry name" value="Ribosomal_Su5_D2-typ_SF"/>
</dbReference>
<dbReference type="InterPro" id="IPR014721">
    <property type="entry name" value="Ribsml_uS5_D2-typ_fold_subgr"/>
</dbReference>
<dbReference type="NCBIfam" id="NF002288">
    <property type="entry name" value="PRK01212.1-4"/>
    <property type="match status" value="1"/>
</dbReference>
<dbReference type="NCBIfam" id="TIGR00191">
    <property type="entry name" value="thrB"/>
    <property type="match status" value="1"/>
</dbReference>
<dbReference type="PANTHER" id="PTHR20861:SF1">
    <property type="entry name" value="HOMOSERINE KINASE"/>
    <property type="match status" value="1"/>
</dbReference>
<dbReference type="PANTHER" id="PTHR20861">
    <property type="entry name" value="HOMOSERINE/4-DIPHOSPHOCYTIDYL-2-C-METHYL-D-ERYTHRITOL KINASE"/>
    <property type="match status" value="1"/>
</dbReference>
<dbReference type="Pfam" id="PF08544">
    <property type="entry name" value="GHMP_kinases_C"/>
    <property type="match status" value="1"/>
</dbReference>
<dbReference type="Pfam" id="PF00288">
    <property type="entry name" value="GHMP_kinases_N"/>
    <property type="match status" value="1"/>
</dbReference>
<dbReference type="PIRSF" id="PIRSF000676">
    <property type="entry name" value="Homoser_kin"/>
    <property type="match status" value="1"/>
</dbReference>
<dbReference type="PRINTS" id="PR00958">
    <property type="entry name" value="HOMSERKINASE"/>
</dbReference>
<dbReference type="SUPFAM" id="SSF55060">
    <property type="entry name" value="GHMP Kinase, C-terminal domain"/>
    <property type="match status" value="1"/>
</dbReference>
<dbReference type="SUPFAM" id="SSF54211">
    <property type="entry name" value="Ribosomal protein S5 domain 2-like"/>
    <property type="match status" value="1"/>
</dbReference>
<dbReference type="PROSITE" id="PS00627">
    <property type="entry name" value="GHMP_KINASES_ATP"/>
    <property type="match status" value="1"/>
</dbReference>